<gene>
    <name evidence="1" type="primary">ispE</name>
    <name type="ordered locus">Bmul_0514</name>
    <name type="ordered locus">BMULJ_02745</name>
</gene>
<reference key="1">
    <citation type="submission" date="2007-10" db="EMBL/GenBank/DDBJ databases">
        <title>Complete sequence of chromosome 1 of Burkholderia multivorans ATCC 17616.</title>
        <authorList>
            <person name="Copeland A."/>
            <person name="Lucas S."/>
            <person name="Lapidus A."/>
            <person name="Barry K."/>
            <person name="Glavina del Rio T."/>
            <person name="Dalin E."/>
            <person name="Tice H."/>
            <person name="Pitluck S."/>
            <person name="Chain P."/>
            <person name="Malfatti S."/>
            <person name="Shin M."/>
            <person name="Vergez L."/>
            <person name="Schmutz J."/>
            <person name="Larimer F."/>
            <person name="Land M."/>
            <person name="Hauser L."/>
            <person name="Kyrpides N."/>
            <person name="Kim E."/>
            <person name="Tiedje J."/>
            <person name="Richardson P."/>
        </authorList>
    </citation>
    <scope>NUCLEOTIDE SEQUENCE [LARGE SCALE GENOMIC DNA]</scope>
    <source>
        <strain>ATCC 17616 / 249</strain>
    </source>
</reference>
<reference key="2">
    <citation type="submission" date="2007-04" db="EMBL/GenBank/DDBJ databases">
        <title>Complete genome sequence of Burkholderia multivorans ATCC 17616.</title>
        <authorList>
            <person name="Ohtsubo Y."/>
            <person name="Yamashita A."/>
            <person name="Kurokawa K."/>
            <person name="Takami H."/>
            <person name="Yuhara S."/>
            <person name="Nishiyama E."/>
            <person name="Endo R."/>
            <person name="Miyazaki R."/>
            <person name="Ono A."/>
            <person name="Yano K."/>
            <person name="Ito M."/>
            <person name="Sota M."/>
            <person name="Yuji N."/>
            <person name="Hattori M."/>
            <person name="Tsuda M."/>
        </authorList>
    </citation>
    <scope>NUCLEOTIDE SEQUENCE [LARGE SCALE GENOMIC DNA]</scope>
    <source>
        <strain>ATCC 17616 / 249</strain>
    </source>
</reference>
<organism>
    <name type="scientific">Burkholderia multivorans (strain ATCC 17616 / 249)</name>
    <dbReference type="NCBI Taxonomy" id="395019"/>
    <lineage>
        <taxon>Bacteria</taxon>
        <taxon>Pseudomonadati</taxon>
        <taxon>Pseudomonadota</taxon>
        <taxon>Betaproteobacteria</taxon>
        <taxon>Burkholderiales</taxon>
        <taxon>Burkholderiaceae</taxon>
        <taxon>Burkholderia</taxon>
        <taxon>Burkholderia cepacia complex</taxon>
    </lineage>
</organism>
<keyword id="KW-0067">ATP-binding</keyword>
<keyword id="KW-0414">Isoprene biosynthesis</keyword>
<keyword id="KW-0418">Kinase</keyword>
<keyword id="KW-0547">Nucleotide-binding</keyword>
<keyword id="KW-1185">Reference proteome</keyword>
<keyword id="KW-0808">Transferase</keyword>
<accession>A9AEY9</accession>
<sequence>MTDSTRSLRNCLAPAKLNLFLHITGRRPNGYHDLQSVFQLLNWGDTLHFTLRDDGKVARATDVPGVPEQSDLVVRAANLLKAHTGTAAGVDIEIDKCLPMGAGLGGGSSDAATTLLALNRLWQLDLPRAELQSLAVKLGADVPFFVFGKNAFAEGIGEELAEVELPTRWFLVVTPRVHVPTAEIFSDELLTRDSKPVTITDFLAQQSSDARWPDSFGRNDMQQVVTSKYAEVAQVVKWLYNVAPARMTGSGASVFAAFQSKQQAEAAKAQLPAGWNGAVAESLNEHPLFAFAS</sequence>
<evidence type="ECO:0000255" key="1">
    <source>
        <dbReference type="HAMAP-Rule" id="MF_00061"/>
    </source>
</evidence>
<protein>
    <recommendedName>
        <fullName evidence="1">4-diphosphocytidyl-2-C-methyl-D-erythritol kinase</fullName>
        <shortName evidence="1">CMK</shortName>
        <ecNumber evidence="1">2.7.1.148</ecNumber>
    </recommendedName>
    <alternativeName>
        <fullName evidence="1">4-(cytidine-5'-diphospho)-2-C-methyl-D-erythritol kinase</fullName>
    </alternativeName>
</protein>
<proteinExistence type="inferred from homology"/>
<dbReference type="EC" id="2.7.1.148" evidence="1"/>
<dbReference type="EMBL" id="CP000868">
    <property type="protein sequence ID" value="ABX14209.1"/>
    <property type="molecule type" value="Genomic_DNA"/>
</dbReference>
<dbReference type="EMBL" id="AP009385">
    <property type="protein sequence ID" value="BAG44634.1"/>
    <property type="molecule type" value="Genomic_DNA"/>
</dbReference>
<dbReference type="RefSeq" id="WP_006398245.1">
    <property type="nucleotide sequence ID" value="NC_010804.1"/>
</dbReference>
<dbReference type="SMR" id="A9AEY9"/>
<dbReference type="STRING" id="395019.BMULJ_02745"/>
<dbReference type="GeneID" id="89571331"/>
<dbReference type="KEGG" id="bmj:BMULJ_02745"/>
<dbReference type="KEGG" id="bmu:Bmul_0514"/>
<dbReference type="eggNOG" id="COG1947">
    <property type="taxonomic scope" value="Bacteria"/>
</dbReference>
<dbReference type="HOGENOM" id="CLU_053057_3_0_4"/>
<dbReference type="UniPathway" id="UPA00056">
    <property type="reaction ID" value="UER00094"/>
</dbReference>
<dbReference type="Proteomes" id="UP000008815">
    <property type="component" value="Chromosome 1"/>
</dbReference>
<dbReference type="GO" id="GO:0050515">
    <property type="term" value="F:4-(cytidine 5'-diphospho)-2-C-methyl-D-erythritol kinase activity"/>
    <property type="evidence" value="ECO:0007669"/>
    <property type="project" value="UniProtKB-UniRule"/>
</dbReference>
<dbReference type="GO" id="GO:0005524">
    <property type="term" value="F:ATP binding"/>
    <property type="evidence" value="ECO:0007669"/>
    <property type="project" value="UniProtKB-UniRule"/>
</dbReference>
<dbReference type="GO" id="GO:0019288">
    <property type="term" value="P:isopentenyl diphosphate biosynthetic process, methylerythritol 4-phosphate pathway"/>
    <property type="evidence" value="ECO:0007669"/>
    <property type="project" value="UniProtKB-UniRule"/>
</dbReference>
<dbReference type="GO" id="GO:0016114">
    <property type="term" value="P:terpenoid biosynthetic process"/>
    <property type="evidence" value="ECO:0007669"/>
    <property type="project" value="InterPro"/>
</dbReference>
<dbReference type="Gene3D" id="3.30.230.10">
    <property type="match status" value="1"/>
</dbReference>
<dbReference type="Gene3D" id="3.30.70.890">
    <property type="entry name" value="GHMP kinase, C-terminal domain"/>
    <property type="match status" value="1"/>
</dbReference>
<dbReference type="HAMAP" id="MF_00061">
    <property type="entry name" value="IspE"/>
    <property type="match status" value="1"/>
</dbReference>
<dbReference type="InterPro" id="IPR013750">
    <property type="entry name" value="GHMP_kinase_C_dom"/>
</dbReference>
<dbReference type="InterPro" id="IPR036554">
    <property type="entry name" value="GHMP_kinase_C_sf"/>
</dbReference>
<dbReference type="InterPro" id="IPR006204">
    <property type="entry name" value="GHMP_kinase_N_dom"/>
</dbReference>
<dbReference type="InterPro" id="IPR004424">
    <property type="entry name" value="IspE"/>
</dbReference>
<dbReference type="InterPro" id="IPR020568">
    <property type="entry name" value="Ribosomal_Su5_D2-typ_SF"/>
</dbReference>
<dbReference type="InterPro" id="IPR014721">
    <property type="entry name" value="Ribsml_uS5_D2-typ_fold_subgr"/>
</dbReference>
<dbReference type="NCBIfam" id="TIGR00154">
    <property type="entry name" value="ispE"/>
    <property type="match status" value="1"/>
</dbReference>
<dbReference type="NCBIfam" id="NF011202">
    <property type="entry name" value="PRK14608.1"/>
    <property type="match status" value="1"/>
</dbReference>
<dbReference type="PANTHER" id="PTHR43527">
    <property type="entry name" value="4-DIPHOSPHOCYTIDYL-2-C-METHYL-D-ERYTHRITOL KINASE, CHLOROPLASTIC"/>
    <property type="match status" value="1"/>
</dbReference>
<dbReference type="PANTHER" id="PTHR43527:SF2">
    <property type="entry name" value="4-DIPHOSPHOCYTIDYL-2-C-METHYL-D-ERYTHRITOL KINASE, CHLOROPLASTIC"/>
    <property type="match status" value="1"/>
</dbReference>
<dbReference type="Pfam" id="PF08544">
    <property type="entry name" value="GHMP_kinases_C"/>
    <property type="match status" value="1"/>
</dbReference>
<dbReference type="Pfam" id="PF00288">
    <property type="entry name" value="GHMP_kinases_N"/>
    <property type="match status" value="1"/>
</dbReference>
<dbReference type="PIRSF" id="PIRSF010376">
    <property type="entry name" value="IspE"/>
    <property type="match status" value="1"/>
</dbReference>
<dbReference type="SUPFAM" id="SSF55060">
    <property type="entry name" value="GHMP Kinase, C-terminal domain"/>
    <property type="match status" value="1"/>
</dbReference>
<dbReference type="SUPFAM" id="SSF54211">
    <property type="entry name" value="Ribosomal protein S5 domain 2-like"/>
    <property type="match status" value="1"/>
</dbReference>
<feature type="chain" id="PRO_1000092067" description="4-diphosphocytidyl-2-C-methyl-D-erythritol kinase">
    <location>
        <begin position="1"/>
        <end position="293"/>
    </location>
</feature>
<feature type="active site" evidence="1">
    <location>
        <position position="16"/>
    </location>
</feature>
<feature type="active site" evidence="1">
    <location>
        <position position="141"/>
    </location>
</feature>
<feature type="binding site" evidence="1">
    <location>
        <begin position="99"/>
        <end position="109"/>
    </location>
    <ligand>
        <name>ATP</name>
        <dbReference type="ChEBI" id="CHEBI:30616"/>
    </ligand>
</feature>
<name>ISPE_BURM1</name>
<comment type="function">
    <text evidence="1">Catalyzes the phosphorylation of the position 2 hydroxy group of 4-diphosphocytidyl-2C-methyl-D-erythritol.</text>
</comment>
<comment type="catalytic activity">
    <reaction evidence="1">
        <text>4-CDP-2-C-methyl-D-erythritol + ATP = 4-CDP-2-C-methyl-D-erythritol 2-phosphate + ADP + H(+)</text>
        <dbReference type="Rhea" id="RHEA:18437"/>
        <dbReference type="ChEBI" id="CHEBI:15378"/>
        <dbReference type="ChEBI" id="CHEBI:30616"/>
        <dbReference type="ChEBI" id="CHEBI:57823"/>
        <dbReference type="ChEBI" id="CHEBI:57919"/>
        <dbReference type="ChEBI" id="CHEBI:456216"/>
        <dbReference type="EC" id="2.7.1.148"/>
    </reaction>
</comment>
<comment type="pathway">
    <text evidence="1">Isoprenoid biosynthesis; isopentenyl diphosphate biosynthesis via DXP pathway; isopentenyl diphosphate from 1-deoxy-D-xylulose 5-phosphate: step 3/6.</text>
</comment>
<comment type="similarity">
    <text evidence="1">Belongs to the GHMP kinase family. IspE subfamily.</text>
</comment>